<accession>A1AL40</accession>
<feature type="chain" id="PRO_0000350302" description="Dual-specificity RNA methyltransferase RlmN">
    <location>
        <begin position="1"/>
        <end position="347"/>
    </location>
</feature>
<feature type="domain" description="Radical SAM core" evidence="2">
    <location>
        <begin position="99"/>
        <end position="327"/>
    </location>
</feature>
<feature type="active site" description="Proton acceptor" evidence="1">
    <location>
        <position position="93"/>
    </location>
</feature>
<feature type="active site" description="S-methylcysteine intermediate" evidence="1">
    <location>
        <position position="332"/>
    </location>
</feature>
<feature type="binding site" evidence="1">
    <location>
        <position position="113"/>
    </location>
    <ligand>
        <name>[4Fe-4S] cluster</name>
        <dbReference type="ChEBI" id="CHEBI:49883"/>
        <note>4Fe-4S-S-AdoMet</note>
    </ligand>
</feature>
<feature type="binding site" evidence="1">
    <location>
        <position position="117"/>
    </location>
    <ligand>
        <name>[4Fe-4S] cluster</name>
        <dbReference type="ChEBI" id="CHEBI:49883"/>
        <note>4Fe-4S-S-AdoMet</note>
    </ligand>
</feature>
<feature type="binding site" evidence="1">
    <location>
        <position position="120"/>
    </location>
    <ligand>
        <name>[4Fe-4S] cluster</name>
        <dbReference type="ChEBI" id="CHEBI:49883"/>
        <note>4Fe-4S-S-AdoMet</note>
    </ligand>
</feature>
<feature type="binding site" evidence="1">
    <location>
        <begin position="158"/>
        <end position="159"/>
    </location>
    <ligand>
        <name>S-adenosyl-L-methionine</name>
        <dbReference type="ChEBI" id="CHEBI:59789"/>
    </ligand>
</feature>
<feature type="binding site" evidence="1">
    <location>
        <position position="190"/>
    </location>
    <ligand>
        <name>S-adenosyl-L-methionine</name>
        <dbReference type="ChEBI" id="CHEBI:59789"/>
    </ligand>
</feature>
<feature type="binding site" evidence="1">
    <location>
        <begin position="213"/>
        <end position="215"/>
    </location>
    <ligand>
        <name>S-adenosyl-L-methionine</name>
        <dbReference type="ChEBI" id="CHEBI:59789"/>
    </ligand>
</feature>
<feature type="binding site" evidence="1">
    <location>
        <position position="289"/>
    </location>
    <ligand>
        <name>S-adenosyl-L-methionine</name>
        <dbReference type="ChEBI" id="CHEBI:59789"/>
    </ligand>
</feature>
<feature type="disulfide bond" description="(transient)" evidence="1">
    <location>
        <begin position="106"/>
        <end position="332"/>
    </location>
</feature>
<protein>
    <recommendedName>
        <fullName evidence="1">Dual-specificity RNA methyltransferase RlmN</fullName>
        <ecNumber evidence="1">2.1.1.192</ecNumber>
    </recommendedName>
    <alternativeName>
        <fullName evidence="1">23S rRNA (adenine(2503)-C(2))-methyltransferase</fullName>
    </alternativeName>
    <alternativeName>
        <fullName evidence="1">23S rRNA m2A2503 methyltransferase</fullName>
    </alternativeName>
    <alternativeName>
        <fullName evidence="1">Ribosomal RNA large subunit methyltransferase N</fullName>
    </alternativeName>
    <alternativeName>
        <fullName evidence="1">tRNA (adenine(37)-C(2))-methyltransferase</fullName>
    </alternativeName>
    <alternativeName>
        <fullName evidence="1">tRNA m2A37 methyltransferase</fullName>
    </alternativeName>
</protein>
<name>RLMN_PELPD</name>
<proteinExistence type="inferred from homology"/>
<reference key="1">
    <citation type="submission" date="2006-10" db="EMBL/GenBank/DDBJ databases">
        <title>Complete sequence of chromosome of Pelobacter propionicus DSM 2379.</title>
        <authorList>
            <consortium name="US DOE Joint Genome Institute"/>
            <person name="Copeland A."/>
            <person name="Lucas S."/>
            <person name="Lapidus A."/>
            <person name="Barry K."/>
            <person name="Detter J.C."/>
            <person name="Glavina del Rio T."/>
            <person name="Hammon N."/>
            <person name="Israni S."/>
            <person name="Dalin E."/>
            <person name="Tice H."/>
            <person name="Pitluck S."/>
            <person name="Saunders E."/>
            <person name="Brettin T."/>
            <person name="Bruce D."/>
            <person name="Han C."/>
            <person name="Tapia R."/>
            <person name="Schmutz J."/>
            <person name="Larimer F."/>
            <person name="Land M."/>
            <person name="Hauser L."/>
            <person name="Kyrpides N."/>
            <person name="Kim E."/>
            <person name="Lovley D."/>
            <person name="Richardson P."/>
        </authorList>
    </citation>
    <scope>NUCLEOTIDE SEQUENCE [LARGE SCALE GENOMIC DNA]</scope>
    <source>
        <strain>DSM 2379 / NBRC 103807 / OttBd1</strain>
    </source>
</reference>
<dbReference type="EC" id="2.1.1.192" evidence="1"/>
<dbReference type="EMBL" id="CP000482">
    <property type="protein sequence ID" value="ABK98060.1"/>
    <property type="molecule type" value="Genomic_DNA"/>
</dbReference>
<dbReference type="RefSeq" id="WP_011734374.1">
    <property type="nucleotide sequence ID" value="NC_008609.1"/>
</dbReference>
<dbReference type="SMR" id="A1AL40"/>
<dbReference type="STRING" id="338966.Ppro_0427"/>
<dbReference type="KEGG" id="ppd:Ppro_0427"/>
<dbReference type="eggNOG" id="COG0820">
    <property type="taxonomic scope" value="Bacteria"/>
</dbReference>
<dbReference type="HOGENOM" id="CLU_029101_2_0_7"/>
<dbReference type="OrthoDB" id="9793973at2"/>
<dbReference type="Proteomes" id="UP000006732">
    <property type="component" value="Chromosome"/>
</dbReference>
<dbReference type="GO" id="GO:0005737">
    <property type="term" value="C:cytoplasm"/>
    <property type="evidence" value="ECO:0007669"/>
    <property type="project" value="UniProtKB-SubCell"/>
</dbReference>
<dbReference type="GO" id="GO:0051539">
    <property type="term" value="F:4 iron, 4 sulfur cluster binding"/>
    <property type="evidence" value="ECO:0007669"/>
    <property type="project" value="UniProtKB-UniRule"/>
</dbReference>
<dbReference type="GO" id="GO:0046872">
    <property type="term" value="F:metal ion binding"/>
    <property type="evidence" value="ECO:0007669"/>
    <property type="project" value="UniProtKB-KW"/>
</dbReference>
<dbReference type="GO" id="GO:0070040">
    <property type="term" value="F:rRNA (adenine(2503)-C2-)-methyltransferase activity"/>
    <property type="evidence" value="ECO:0007669"/>
    <property type="project" value="UniProtKB-UniRule"/>
</dbReference>
<dbReference type="GO" id="GO:0019843">
    <property type="term" value="F:rRNA binding"/>
    <property type="evidence" value="ECO:0007669"/>
    <property type="project" value="UniProtKB-UniRule"/>
</dbReference>
<dbReference type="GO" id="GO:0002935">
    <property type="term" value="F:tRNA (adenine(37)-C2)-methyltransferase activity"/>
    <property type="evidence" value="ECO:0007669"/>
    <property type="project" value="UniProtKB-UniRule"/>
</dbReference>
<dbReference type="GO" id="GO:0000049">
    <property type="term" value="F:tRNA binding"/>
    <property type="evidence" value="ECO:0007669"/>
    <property type="project" value="UniProtKB-UniRule"/>
</dbReference>
<dbReference type="GO" id="GO:0070475">
    <property type="term" value="P:rRNA base methylation"/>
    <property type="evidence" value="ECO:0007669"/>
    <property type="project" value="UniProtKB-UniRule"/>
</dbReference>
<dbReference type="GO" id="GO:0030488">
    <property type="term" value="P:tRNA methylation"/>
    <property type="evidence" value="ECO:0007669"/>
    <property type="project" value="UniProtKB-UniRule"/>
</dbReference>
<dbReference type="CDD" id="cd01335">
    <property type="entry name" value="Radical_SAM"/>
    <property type="match status" value="1"/>
</dbReference>
<dbReference type="FunFam" id="1.10.150.530:FF:000003">
    <property type="entry name" value="Dual-specificity RNA methyltransferase RlmN"/>
    <property type="match status" value="1"/>
</dbReference>
<dbReference type="FunFam" id="3.20.20.70:FF:000014">
    <property type="entry name" value="Probable dual-specificity RNA methyltransferase RlmN"/>
    <property type="match status" value="1"/>
</dbReference>
<dbReference type="Gene3D" id="1.10.150.530">
    <property type="match status" value="1"/>
</dbReference>
<dbReference type="Gene3D" id="3.20.20.70">
    <property type="entry name" value="Aldolase class I"/>
    <property type="match status" value="1"/>
</dbReference>
<dbReference type="HAMAP" id="MF_01849">
    <property type="entry name" value="RNA_methyltr_RlmN"/>
    <property type="match status" value="1"/>
</dbReference>
<dbReference type="InterPro" id="IPR013785">
    <property type="entry name" value="Aldolase_TIM"/>
</dbReference>
<dbReference type="InterPro" id="IPR040072">
    <property type="entry name" value="Methyltransferase_A"/>
</dbReference>
<dbReference type="InterPro" id="IPR048641">
    <property type="entry name" value="RlmN_N"/>
</dbReference>
<dbReference type="InterPro" id="IPR027492">
    <property type="entry name" value="RNA_MTrfase_RlmN"/>
</dbReference>
<dbReference type="InterPro" id="IPR004383">
    <property type="entry name" value="rRNA_lsu_MTrfase_RlmN/Cfr"/>
</dbReference>
<dbReference type="InterPro" id="IPR007197">
    <property type="entry name" value="rSAM"/>
</dbReference>
<dbReference type="NCBIfam" id="TIGR00048">
    <property type="entry name" value="rRNA_mod_RlmN"/>
    <property type="match status" value="1"/>
</dbReference>
<dbReference type="PANTHER" id="PTHR30544">
    <property type="entry name" value="23S RRNA METHYLTRANSFERASE"/>
    <property type="match status" value="1"/>
</dbReference>
<dbReference type="PANTHER" id="PTHR30544:SF5">
    <property type="entry name" value="RADICAL SAM CORE DOMAIN-CONTAINING PROTEIN"/>
    <property type="match status" value="1"/>
</dbReference>
<dbReference type="Pfam" id="PF04055">
    <property type="entry name" value="Radical_SAM"/>
    <property type="match status" value="1"/>
</dbReference>
<dbReference type="Pfam" id="PF21016">
    <property type="entry name" value="RlmN_N"/>
    <property type="match status" value="1"/>
</dbReference>
<dbReference type="PIRSF" id="PIRSF006004">
    <property type="entry name" value="CHP00048"/>
    <property type="match status" value="1"/>
</dbReference>
<dbReference type="SFLD" id="SFLDF00275">
    <property type="entry name" value="adenosine_C2_methyltransferase"/>
    <property type="match status" value="1"/>
</dbReference>
<dbReference type="SFLD" id="SFLDS00029">
    <property type="entry name" value="Radical_SAM"/>
    <property type="match status" value="1"/>
</dbReference>
<dbReference type="SUPFAM" id="SSF102114">
    <property type="entry name" value="Radical SAM enzymes"/>
    <property type="match status" value="1"/>
</dbReference>
<dbReference type="PROSITE" id="PS51918">
    <property type="entry name" value="RADICAL_SAM"/>
    <property type="match status" value="1"/>
</dbReference>
<comment type="function">
    <text evidence="1">Specifically methylates position 2 of adenine 2503 in 23S rRNA and position 2 of adenine 37 in tRNAs. m2A2503 modification seems to play a crucial role in the proofreading step occurring at the peptidyl transferase center and thus would serve to optimize ribosomal fidelity.</text>
</comment>
<comment type="catalytic activity">
    <reaction evidence="1">
        <text>adenosine(2503) in 23S rRNA + 2 reduced [2Fe-2S]-[ferredoxin] + 2 S-adenosyl-L-methionine = 2-methyladenosine(2503) in 23S rRNA + 5'-deoxyadenosine + L-methionine + 2 oxidized [2Fe-2S]-[ferredoxin] + S-adenosyl-L-homocysteine</text>
        <dbReference type="Rhea" id="RHEA:42916"/>
        <dbReference type="Rhea" id="RHEA-COMP:10000"/>
        <dbReference type="Rhea" id="RHEA-COMP:10001"/>
        <dbReference type="Rhea" id="RHEA-COMP:10152"/>
        <dbReference type="Rhea" id="RHEA-COMP:10282"/>
        <dbReference type="ChEBI" id="CHEBI:17319"/>
        <dbReference type="ChEBI" id="CHEBI:33737"/>
        <dbReference type="ChEBI" id="CHEBI:33738"/>
        <dbReference type="ChEBI" id="CHEBI:57844"/>
        <dbReference type="ChEBI" id="CHEBI:57856"/>
        <dbReference type="ChEBI" id="CHEBI:59789"/>
        <dbReference type="ChEBI" id="CHEBI:74411"/>
        <dbReference type="ChEBI" id="CHEBI:74497"/>
        <dbReference type="EC" id="2.1.1.192"/>
    </reaction>
</comment>
<comment type="catalytic activity">
    <reaction evidence="1">
        <text>adenosine(37) in tRNA + 2 reduced [2Fe-2S]-[ferredoxin] + 2 S-adenosyl-L-methionine = 2-methyladenosine(37) in tRNA + 5'-deoxyadenosine + L-methionine + 2 oxidized [2Fe-2S]-[ferredoxin] + S-adenosyl-L-homocysteine</text>
        <dbReference type="Rhea" id="RHEA:43332"/>
        <dbReference type="Rhea" id="RHEA-COMP:10000"/>
        <dbReference type="Rhea" id="RHEA-COMP:10001"/>
        <dbReference type="Rhea" id="RHEA-COMP:10162"/>
        <dbReference type="Rhea" id="RHEA-COMP:10485"/>
        <dbReference type="ChEBI" id="CHEBI:17319"/>
        <dbReference type="ChEBI" id="CHEBI:33737"/>
        <dbReference type="ChEBI" id="CHEBI:33738"/>
        <dbReference type="ChEBI" id="CHEBI:57844"/>
        <dbReference type="ChEBI" id="CHEBI:57856"/>
        <dbReference type="ChEBI" id="CHEBI:59789"/>
        <dbReference type="ChEBI" id="CHEBI:74411"/>
        <dbReference type="ChEBI" id="CHEBI:74497"/>
        <dbReference type="EC" id="2.1.1.192"/>
    </reaction>
</comment>
<comment type="cofactor">
    <cofactor evidence="1">
        <name>[4Fe-4S] cluster</name>
        <dbReference type="ChEBI" id="CHEBI:49883"/>
    </cofactor>
    <text evidence="1">Binds 1 [4Fe-4S] cluster. The cluster is coordinated with 3 cysteines and an exchangeable S-adenosyl-L-methionine.</text>
</comment>
<comment type="subcellular location">
    <subcellularLocation>
        <location evidence="1">Cytoplasm</location>
    </subcellularLocation>
</comment>
<comment type="miscellaneous">
    <text evidence="1">Reaction proceeds by a ping-pong mechanism involving intermediate methylation of a conserved cysteine residue.</text>
</comment>
<comment type="similarity">
    <text evidence="1">Belongs to the radical SAM superfamily. RlmN family.</text>
</comment>
<evidence type="ECO:0000255" key="1">
    <source>
        <dbReference type="HAMAP-Rule" id="MF_01849"/>
    </source>
</evidence>
<evidence type="ECO:0000255" key="2">
    <source>
        <dbReference type="PROSITE-ProRule" id="PRU01266"/>
    </source>
</evidence>
<organism>
    <name type="scientific">Pelobacter propionicus (strain DSM 2379 / NBRC 103807 / OttBd1)</name>
    <dbReference type="NCBI Taxonomy" id="338966"/>
    <lineage>
        <taxon>Bacteria</taxon>
        <taxon>Pseudomonadati</taxon>
        <taxon>Thermodesulfobacteriota</taxon>
        <taxon>Desulfuromonadia</taxon>
        <taxon>Desulfuromonadales</taxon>
        <taxon>Desulfuromonadaceae</taxon>
        <taxon>Pelobacter</taxon>
    </lineage>
</organism>
<keyword id="KW-0004">4Fe-4S</keyword>
<keyword id="KW-0963">Cytoplasm</keyword>
<keyword id="KW-1015">Disulfide bond</keyword>
<keyword id="KW-0408">Iron</keyword>
<keyword id="KW-0411">Iron-sulfur</keyword>
<keyword id="KW-0479">Metal-binding</keyword>
<keyword id="KW-0489">Methyltransferase</keyword>
<keyword id="KW-1185">Reference proteome</keyword>
<keyword id="KW-0698">rRNA processing</keyword>
<keyword id="KW-0949">S-adenosyl-L-methionine</keyword>
<keyword id="KW-0808">Transferase</keyword>
<keyword id="KW-0819">tRNA processing</keyword>
<gene>
    <name evidence="1" type="primary">rlmN</name>
    <name type="ordered locus">Ppro_0427</name>
</gene>
<sequence>MTEKTDLKNLTLPALEQFLRGQGKERFRATQVFKWIYQHDARSFQEMTNISKDLRAELEAKAYISNLEPEAVEVGGDGTRKYLFGLEDGNSVESVLIPDEGRNTLCISSQVGCAMGCAFCLTGTFRLTRNLTTAEIVNQIMAVRRDVEIRNIVMMGMGEPLHNLDNVIPAIHIMIDGNGLQLSNRRVTVSTCGLAPEMERLGRELPNVNLAVSLNATTDELRDRIMPINRRYPLKELLSACREFPLPGRRKVTFEYVMLGGLNDTLEDAKRLLRLTSDIPNKVNLIPFNEFQGCEFRSPTRAAIDAFHKYLIDRHVTVITRDSRGSDISAACGQLKGKLDAARQPTE</sequence>